<reference evidence="6" key="1">
    <citation type="journal article" date="2001" name="Eur. J. Biochem.">
        <title>A putative beta2-adrenoceptor from the rainbow trout (Oncorhynuchus mykiss). Molecular characterization and pharmacology.</title>
        <authorList>
            <person name="Nickerson J.G."/>
            <person name="Dugan S.G."/>
            <person name="Drouin G."/>
            <person name="Moon T.W."/>
        </authorList>
    </citation>
    <scope>NUCLEOTIDE SEQUENCE [MRNA]</scope>
    <scope>TISSUE SPECIFICITY</scope>
</reference>
<feature type="chain" id="PRO_0000069137" description="Beta-2 adrenergic receptor">
    <location>
        <begin position="1"/>
        <end position="409"/>
    </location>
</feature>
<feature type="topological domain" description="Extracellular" evidence="1">
    <location>
        <begin position="1"/>
        <end position="37"/>
    </location>
</feature>
<feature type="transmembrane region" description="Helical; Name=1" evidence="1">
    <location>
        <begin position="38"/>
        <end position="61"/>
    </location>
</feature>
<feature type="topological domain" description="Cytoplasmic" evidence="1">
    <location>
        <begin position="62"/>
        <end position="74"/>
    </location>
</feature>
<feature type="transmembrane region" description="Helical; Name=2" evidence="1">
    <location>
        <begin position="75"/>
        <end position="98"/>
    </location>
</feature>
<feature type="topological domain" description="Extracellular" evidence="1">
    <location>
        <begin position="99"/>
        <end position="109"/>
    </location>
</feature>
<feature type="transmembrane region" description="Helical; Name=3" evidence="1">
    <location>
        <begin position="110"/>
        <end position="132"/>
    </location>
</feature>
<feature type="topological domain" description="Cytoplasmic" evidence="1">
    <location>
        <begin position="133"/>
        <end position="153"/>
    </location>
</feature>
<feature type="transmembrane region" description="Helical; Name=4" evidence="1">
    <location>
        <begin position="154"/>
        <end position="177"/>
    </location>
</feature>
<feature type="topological domain" description="Extracellular" evidence="1">
    <location>
        <begin position="178"/>
        <end position="199"/>
    </location>
</feature>
<feature type="transmembrane region" description="Helical; Name=5" evidence="1">
    <location>
        <begin position="200"/>
        <end position="223"/>
    </location>
</feature>
<feature type="topological domain" description="Cytoplasmic" evidence="1">
    <location>
        <begin position="224"/>
        <end position="282"/>
    </location>
</feature>
<feature type="transmembrane region" description="Helical; Name=6" evidence="1">
    <location>
        <begin position="283"/>
        <end position="306"/>
    </location>
</feature>
<feature type="topological domain" description="Extracellular" evidence="1">
    <location>
        <begin position="307"/>
        <end position="318"/>
    </location>
</feature>
<feature type="transmembrane region" description="Helical; Name=7" evidence="1">
    <location>
        <begin position="319"/>
        <end position="337"/>
    </location>
</feature>
<feature type="topological domain" description="Cytoplasmic" evidence="1">
    <location>
        <begin position="338"/>
        <end position="409"/>
    </location>
</feature>
<feature type="lipid moiety-binding region" description="S-palmitoyl cysteine" evidence="1">
    <location>
        <position position="349"/>
    </location>
</feature>
<feature type="glycosylation site" description="N-linked (GlcNAc...) asparagine" evidence="3">
    <location>
        <position position="3"/>
    </location>
</feature>
<feature type="glycosylation site" description="N-linked (GlcNAc...) asparagine" evidence="3">
    <location>
        <position position="11"/>
    </location>
</feature>
<feature type="glycosylation site" description="N-linked (GlcNAc...) asparagine" evidence="3">
    <location>
        <position position="20"/>
    </location>
</feature>
<feature type="disulfide bond" evidence="4">
    <location>
        <begin position="109"/>
        <end position="194"/>
    </location>
</feature>
<feature type="disulfide bond" evidence="4">
    <location>
        <begin position="187"/>
        <end position="193"/>
    </location>
</feature>
<protein>
    <recommendedName>
        <fullName>Beta-2 adrenergic receptor</fullName>
    </recommendedName>
    <alternativeName>
        <fullName>Beta-2 adrenoreceptor</fullName>
        <shortName>Beta-2 adrenoceptor</shortName>
    </alternativeName>
</protein>
<sequence>MENVSTPAVFNLSDLSVEMNSSSRQWSYSEYSEAVAVLLGILMALLVMCIVFGNVLVITAIVRFQRLQTVTNMFITSLACADLVMGLLVVPFGACYILLNTWHFGSFLCEFWTAADVLCVTASIETLCVIALDRYLAITSPLRYPSLLTKRKACVVVVTVWGVAALISFLPIHMKWWVSDEPEALSCLEDAHCCDFNTNAAYAVASSVVSFYIPLAVMAFVYGRVFQEARKQLEKIRGSEGRFHAQMIDNNQGQDGGDGSGGGGGNGKRPKFCLKEHKALKTLGIIMGTFTLCWLPFFVLNVVVTIWKVDNIKMPFRILNWIGYANSAFNPLIYCRSPEFRYAFQEILCLRGAAFPTNGYIYRGHSLRLSPKDKPGSLSNNVGTVELGSLSSVTNINGYCNNPPLASIV</sequence>
<gene>
    <name type="primary">adrb2</name>
</gene>
<proteinExistence type="evidence at transcript level"/>
<name>ADRB2_ONCMY</name>
<dbReference type="EMBL" id="AY044093">
    <property type="protein sequence ID" value="AAK94672.1"/>
    <property type="molecule type" value="mRNA"/>
</dbReference>
<dbReference type="RefSeq" id="NP_001117912.1">
    <property type="nucleotide sequence ID" value="NM_001124440.1"/>
</dbReference>
<dbReference type="SMR" id="Q8UUY8"/>
<dbReference type="GlyCosmos" id="Q8UUY8">
    <property type="glycosylation" value="3 sites, No reported glycans"/>
</dbReference>
<dbReference type="GeneID" id="100136153"/>
<dbReference type="KEGG" id="omy:100136153"/>
<dbReference type="OrthoDB" id="5957871at2759"/>
<dbReference type="Proteomes" id="UP000694395">
    <property type="component" value="Unplaced"/>
</dbReference>
<dbReference type="GO" id="GO:0016020">
    <property type="term" value="C:membrane"/>
    <property type="evidence" value="ECO:0000303"/>
    <property type="project" value="UniProtKB"/>
</dbReference>
<dbReference type="GO" id="GO:0005886">
    <property type="term" value="C:plasma membrane"/>
    <property type="evidence" value="ECO:0007669"/>
    <property type="project" value="UniProtKB-SubCell"/>
</dbReference>
<dbReference type="GO" id="GO:0004941">
    <property type="term" value="F:beta2-adrenergic receptor activity"/>
    <property type="evidence" value="ECO:0000303"/>
    <property type="project" value="UniProtKB"/>
</dbReference>
<dbReference type="GO" id="GO:0051380">
    <property type="term" value="F:norepinephrine binding"/>
    <property type="evidence" value="ECO:0007669"/>
    <property type="project" value="TreeGrafter"/>
</dbReference>
<dbReference type="GO" id="GO:0007190">
    <property type="term" value="P:activation of adenylate cyclase activity"/>
    <property type="evidence" value="ECO:0000303"/>
    <property type="project" value="UniProtKB"/>
</dbReference>
<dbReference type="GO" id="GO:0071880">
    <property type="term" value="P:adenylate cyclase-activating adrenergic receptor signaling pathway"/>
    <property type="evidence" value="ECO:0007669"/>
    <property type="project" value="TreeGrafter"/>
</dbReference>
<dbReference type="GO" id="GO:0071875">
    <property type="term" value="P:adrenergic receptor signaling pathway"/>
    <property type="evidence" value="ECO:0000315"/>
    <property type="project" value="AgBase"/>
</dbReference>
<dbReference type="GO" id="GO:0032811">
    <property type="term" value="P:negative regulation of epinephrine secretion"/>
    <property type="evidence" value="ECO:0000315"/>
    <property type="project" value="AgBase"/>
</dbReference>
<dbReference type="GO" id="GO:0002025">
    <property type="term" value="P:norepinephrine-epinephrine-mediated vasodilation involved in regulation of systemic arterial blood pressure"/>
    <property type="evidence" value="ECO:0007669"/>
    <property type="project" value="TreeGrafter"/>
</dbReference>
<dbReference type="GO" id="GO:1901098">
    <property type="term" value="P:positive regulation of autophagosome maturation"/>
    <property type="evidence" value="ECO:0000250"/>
    <property type="project" value="GO_Central"/>
</dbReference>
<dbReference type="GO" id="GO:1904504">
    <property type="term" value="P:positive regulation of lipophagy"/>
    <property type="evidence" value="ECO:0000250"/>
    <property type="project" value="GO_Central"/>
</dbReference>
<dbReference type="GO" id="GO:0043410">
    <property type="term" value="P:positive regulation of MAPK cascade"/>
    <property type="evidence" value="ECO:0007669"/>
    <property type="project" value="TreeGrafter"/>
</dbReference>
<dbReference type="GO" id="GO:0043434">
    <property type="term" value="P:response to peptide hormone"/>
    <property type="evidence" value="ECO:0000315"/>
    <property type="project" value="AgBase"/>
</dbReference>
<dbReference type="FunFam" id="1.20.1070.10:FF:000057">
    <property type="entry name" value="Beta-1 adrenergic receptor"/>
    <property type="match status" value="1"/>
</dbReference>
<dbReference type="Gene3D" id="1.20.1070.10">
    <property type="entry name" value="Rhodopsin 7-helix transmembrane proteins"/>
    <property type="match status" value="1"/>
</dbReference>
<dbReference type="InterPro" id="IPR002233">
    <property type="entry name" value="ADR_fam"/>
</dbReference>
<dbReference type="InterPro" id="IPR000276">
    <property type="entry name" value="GPCR_Rhodpsn"/>
</dbReference>
<dbReference type="InterPro" id="IPR017452">
    <property type="entry name" value="GPCR_Rhodpsn_7TM"/>
</dbReference>
<dbReference type="PANTHER" id="PTHR24248">
    <property type="entry name" value="ADRENERGIC RECEPTOR-RELATED G-PROTEIN COUPLED RECEPTOR"/>
    <property type="match status" value="1"/>
</dbReference>
<dbReference type="PANTHER" id="PTHR24248:SF21">
    <property type="entry name" value="BETA-2 ADRENERGIC RECEPTOR"/>
    <property type="match status" value="1"/>
</dbReference>
<dbReference type="Pfam" id="PF00001">
    <property type="entry name" value="7tm_1"/>
    <property type="match status" value="1"/>
</dbReference>
<dbReference type="PRINTS" id="PR01103">
    <property type="entry name" value="ADRENERGICR"/>
</dbReference>
<dbReference type="PRINTS" id="PR00237">
    <property type="entry name" value="GPCRRHODOPSN"/>
</dbReference>
<dbReference type="SMART" id="SM01381">
    <property type="entry name" value="7TM_GPCR_Srsx"/>
    <property type="match status" value="1"/>
</dbReference>
<dbReference type="SUPFAM" id="SSF81321">
    <property type="entry name" value="Family A G protein-coupled receptor-like"/>
    <property type="match status" value="1"/>
</dbReference>
<dbReference type="PROSITE" id="PS00237">
    <property type="entry name" value="G_PROTEIN_RECEP_F1_1"/>
    <property type="match status" value="1"/>
</dbReference>
<dbReference type="PROSITE" id="PS50262">
    <property type="entry name" value="G_PROTEIN_RECEP_F1_2"/>
    <property type="match status" value="1"/>
</dbReference>
<comment type="function">
    <text evidence="2">Beta-adrenergic receptors mediate the catecholamine-induced activation of adenylate cyclase through the action of G proteins. The beta-2-adrenergic receptor binds epinephrine with an approximately 30-fold greater affinity than it does norepinephrine (By similarity).</text>
</comment>
<comment type="subcellular location">
    <subcellularLocation>
        <location evidence="2">Cell membrane</location>
        <topology evidence="2">Multi-pass membrane protein</topology>
    </subcellularLocation>
</comment>
<comment type="tissue specificity">
    <text evidence="5">Highly expressed in the liver and red and white muscle, with lower levels of expression in the gills, heart, kidney and spleen.</text>
</comment>
<comment type="PTM">
    <text evidence="5">Lacks the regulatory protein kinase A phosphorylation sites within the G-protein binding domain that mediate desensitization and are present in mammalian homologs.</text>
</comment>
<comment type="similarity">
    <text evidence="4">Belongs to the G-protein coupled receptor 1 family. Adrenergic receptor subfamily. ADRB2 sub-subfamily.</text>
</comment>
<keyword id="KW-1003">Cell membrane</keyword>
<keyword id="KW-1015">Disulfide bond</keyword>
<keyword id="KW-0297">G-protein coupled receptor</keyword>
<keyword id="KW-0325">Glycoprotein</keyword>
<keyword id="KW-0449">Lipoprotein</keyword>
<keyword id="KW-0472">Membrane</keyword>
<keyword id="KW-0564">Palmitate</keyword>
<keyword id="KW-0675">Receptor</keyword>
<keyword id="KW-0807">Transducer</keyword>
<keyword id="KW-0812">Transmembrane</keyword>
<keyword id="KW-1133">Transmembrane helix</keyword>
<organism evidence="7">
    <name type="scientific">Oncorhynchus mykiss</name>
    <name type="common">Rainbow trout</name>
    <name type="synonym">Salmo gairdneri</name>
    <dbReference type="NCBI Taxonomy" id="8022"/>
    <lineage>
        <taxon>Eukaryota</taxon>
        <taxon>Metazoa</taxon>
        <taxon>Chordata</taxon>
        <taxon>Craniata</taxon>
        <taxon>Vertebrata</taxon>
        <taxon>Euteleostomi</taxon>
        <taxon>Actinopterygii</taxon>
        <taxon>Neopterygii</taxon>
        <taxon>Teleostei</taxon>
        <taxon>Protacanthopterygii</taxon>
        <taxon>Salmoniformes</taxon>
        <taxon>Salmonidae</taxon>
        <taxon>Salmoninae</taxon>
        <taxon>Oncorhynchus</taxon>
    </lineage>
</organism>
<accession>Q8UUY8</accession>
<evidence type="ECO:0000250" key="1"/>
<evidence type="ECO:0000250" key="2">
    <source>
        <dbReference type="UniProtKB" id="P07550"/>
    </source>
</evidence>
<evidence type="ECO:0000255" key="3"/>
<evidence type="ECO:0000255" key="4">
    <source>
        <dbReference type="PROSITE-ProRule" id="PRU00521"/>
    </source>
</evidence>
<evidence type="ECO:0000269" key="5">
    <source>
    </source>
</evidence>
<evidence type="ECO:0000305" key="6"/>
<evidence type="ECO:0000312" key="7">
    <source>
        <dbReference type="EMBL" id="AAK94672.1"/>
    </source>
</evidence>